<proteinExistence type="inferred from homology"/>
<protein>
    <recommendedName>
        <fullName evidence="1">Lipoprotein-releasing system ATP-binding protein LolD</fullName>
        <ecNumber evidence="1">7.6.2.-</ecNumber>
    </recommendedName>
</protein>
<evidence type="ECO:0000255" key="1">
    <source>
        <dbReference type="HAMAP-Rule" id="MF_01708"/>
    </source>
</evidence>
<reference key="1">
    <citation type="journal article" date="2006" name="J. Bacteriol.">
        <title>The genome sequence of the obligately chemolithoautotrophic, facultatively anaerobic bacterium Thiobacillus denitrificans.</title>
        <authorList>
            <person name="Beller H.R."/>
            <person name="Chain P.S."/>
            <person name="Letain T.E."/>
            <person name="Chakicherla A."/>
            <person name="Larimer F.W."/>
            <person name="Richardson P.M."/>
            <person name="Coleman M.A."/>
            <person name="Wood A.P."/>
            <person name="Kelly D.P."/>
        </authorList>
    </citation>
    <scope>NUCLEOTIDE SEQUENCE [LARGE SCALE GENOMIC DNA]</scope>
    <source>
        <strain>ATCC 25259 / T1</strain>
    </source>
</reference>
<accession>Q3SI20</accession>
<name>LOLD_THIDA</name>
<feature type="chain" id="PRO_0000272161" description="Lipoprotein-releasing system ATP-binding protein LolD">
    <location>
        <begin position="1"/>
        <end position="226"/>
    </location>
</feature>
<feature type="domain" description="ABC transporter" evidence="1">
    <location>
        <begin position="6"/>
        <end position="226"/>
    </location>
</feature>
<feature type="binding site" evidence="1">
    <location>
        <begin position="42"/>
        <end position="49"/>
    </location>
    <ligand>
        <name>ATP</name>
        <dbReference type="ChEBI" id="CHEBI:30616"/>
    </ligand>
</feature>
<dbReference type="EC" id="7.6.2.-" evidence="1"/>
<dbReference type="EMBL" id="CP000116">
    <property type="protein sequence ID" value="AAZ97713.1"/>
    <property type="molecule type" value="Genomic_DNA"/>
</dbReference>
<dbReference type="RefSeq" id="WP_011312272.1">
    <property type="nucleotide sequence ID" value="NC_007404.1"/>
</dbReference>
<dbReference type="SMR" id="Q3SI20"/>
<dbReference type="STRING" id="292415.Tbd_1760"/>
<dbReference type="KEGG" id="tbd:Tbd_1760"/>
<dbReference type="eggNOG" id="COG1136">
    <property type="taxonomic scope" value="Bacteria"/>
</dbReference>
<dbReference type="HOGENOM" id="CLU_000604_1_22_4"/>
<dbReference type="OrthoDB" id="8524638at2"/>
<dbReference type="Proteomes" id="UP000008291">
    <property type="component" value="Chromosome"/>
</dbReference>
<dbReference type="GO" id="GO:0005886">
    <property type="term" value="C:plasma membrane"/>
    <property type="evidence" value="ECO:0007669"/>
    <property type="project" value="UniProtKB-SubCell"/>
</dbReference>
<dbReference type="GO" id="GO:0005524">
    <property type="term" value="F:ATP binding"/>
    <property type="evidence" value="ECO:0007669"/>
    <property type="project" value="UniProtKB-KW"/>
</dbReference>
<dbReference type="GO" id="GO:0016887">
    <property type="term" value="F:ATP hydrolysis activity"/>
    <property type="evidence" value="ECO:0007669"/>
    <property type="project" value="InterPro"/>
</dbReference>
<dbReference type="GO" id="GO:0022857">
    <property type="term" value="F:transmembrane transporter activity"/>
    <property type="evidence" value="ECO:0007669"/>
    <property type="project" value="TreeGrafter"/>
</dbReference>
<dbReference type="GO" id="GO:0044874">
    <property type="term" value="P:lipoprotein localization to outer membrane"/>
    <property type="evidence" value="ECO:0007669"/>
    <property type="project" value="TreeGrafter"/>
</dbReference>
<dbReference type="GO" id="GO:0089705">
    <property type="term" value="P:protein localization to outer membrane"/>
    <property type="evidence" value="ECO:0007669"/>
    <property type="project" value="TreeGrafter"/>
</dbReference>
<dbReference type="CDD" id="cd03255">
    <property type="entry name" value="ABC_MJ0796_LolCDE_FtsE"/>
    <property type="match status" value="1"/>
</dbReference>
<dbReference type="FunFam" id="3.40.50.300:FF:000230">
    <property type="entry name" value="Lipoprotein-releasing system ATP-binding protein LolD"/>
    <property type="match status" value="1"/>
</dbReference>
<dbReference type="Gene3D" id="3.40.50.300">
    <property type="entry name" value="P-loop containing nucleotide triphosphate hydrolases"/>
    <property type="match status" value="1"/>
</dbReference>
<dbReference type="InterPro" id="IPR003593">
    <property type="entry name" value="AAA+_ATPase"/>
</dbReference>
<dbReference type="InterPro" id="IPR003439">
    <property type="entry name" value="ABC_transporter-like_ATP-bd"/>
</dbReference>
<dbReference type="InterPro" id="IPR017871">
    <property type="entry name" value="ABC_transporter-like_CS"/>
</dbReference>
<dbReference type="InterPro" id="IPR015854">
    <property type="entry name" value="ABC_transpr_LolD-like"/>
</dbReference>
<dbReference type="InterPro" id="IPR011924">
    <property type="entry name" value="LolD_lipo_ATP-bd"/>
</dbReference>
<dbReference type="InterPro" id="IPR017911">
    <property type="entry name" value="MacB-like_ATP-bd"/>
</dbReference>
<dbReference type="InterPro" id="IPR027417">
    <property type="entry name" value="P-loop_NTPase"/>
</dbReference>
<dbReference type="NCBIfam" id="TIGR02211">
    <property type="entry name" value="LolD_lipo_ex"/>
    <property type="match status" value="1"/>
</dbReference>
<dbReference type="PANTHER" id="PTHR24220">
    <property type="entry name" value="IMPORT ATP-BINDING PROTEIN"/>
    <property type="match status" value="1"/>
</dbReference>
<dbReference type="PANTHER" id="PTHR24220:SF689">
    <property type="entry name" value="LIPOPROTEIN-RELEASING SYSTEM ATP-BINDING PROTEIN LOLD"/>
    <property type="match status" value="1"/>
</dbReference>
<dbReference type="Pfam" id="PF00005">
    <property type="entry name" value="ABC_tran"/>
    <property type="match status" value="1"/>
</dbReference>
<dbReference type="SMART" id="SM00382">
    <property type="entry name" value="AAA"/>
    <property type="match status" value="1"/>
</dbReference>
<dbReference type="SUPFAM" id="SSF52540">
    <property type="entry name" value="P-loop containing nucleoside triphosphate hydrolases"/>
    <property type="match status" value="1"/>
</dbReference>
<dbReference type="PROSITE" id="PS00211">
    <property type="entry name" value="ABC_TRANSPORTER_1"/>
    <property type="match status" value="1"/>
</dbReference>
<dbReference type="PROSITE" id="PS50893">
    <property type="entry name" value="ABC_TRANSPORTER_2"/>
    <property type="match status" value="1"/>
</dbReference>
<dbReference type="PROSITE" id="PS51244">
    <property type="entry name" value="LOLD"/>
    <property type="match status" value="1"/>
</dbReference>
<gene>
    <name evidence="1" type="primary">lolD</name>
    <name type="ordered locus">Tbd_1760</name>
</gene>
<keyword id="KW-0067">ATP-binding</keyword>
<keyword id="KW-0997">Cell inner membrane</keyword>
<keyword id="KW-1003">Cell membrane</keyword>
<keyword id="KW-0472">Membrane</keyword>
<keyword id="KW-0547">Nucleotide-binding</keyword>
<keyword id="KW-1185">Reference proteome</keyword>
<keyword id="KW-1278">Translocase</keyword>
<keyword id="KW-0813">Transport</keyword>
<sequence length="226" mass="24263">MNETVLRCSGLGKTFRQGKVDVPVLRSVDLAVGTAESLAIVGASGSGKSTLLHLLGGLDTPTRGDVALLGKNPFALSEAERCRLRNTALGFVYQFHHLLPEFSAVENAAMPLIIRRVARAEALARAAEVLDAVGLTHRLAHRPGELSGGERQRVAIARAVVTRPACILADEPTGNLDHHTADTVFDLMRELNRKQGTSLVVVTHDVELAARMDRQLRLVDGTLQAA</sequence>
<organism>
    <name type="scientific">Thiobacillus denitrificans (strain ATCC 25259 / T1)</name>
    <dbReference type="NCBI Taxonomy" id="292415"/>
    <lineage>
        <taxon>Bacteria</taxon>
        <taxon>Pseudomonadati</taxon>
        <taxon>Pseudomonadota</taxon>
        <taxon>Betaproteobacteria</taxon>
        <taxon>Nitrosomonadales</taxon>
        <taxon>Thiobacillaceae</taxon>
        <taxon>Thiobacillus</taxon>
    </lineage>
</organism>
<comment type="function">
    <text evidence="1">Part of the ABC transporter complex LolCDE involved in the translocation of mature outer membrane-directed lipoproteins, from the inner membrane to the periplasmic chaperone, LolA. Responsible for the formation of the LolA-lipoprotein complex in an ATP-dependent manner.</text>
</comment>
<comment type="subunit">
    <text evidence="1">The complex is composed of two ATP-binding proteins (LolD) and two transmembrane proteins (LolC and LolE).</text>
</comment>
<comment type="subcellular location">
    <subcellularLocation>
        <location evidence="1">Cell inner membrane</location>
        <topology evidence="1">Peripheral membrane protein</topology>
    </subcellularLocation>
</comment>
<comment type="similarity">
    <text evidence="1">Belongs to the ABC transporter superfamily. Lipoprotein translocase (TC 3.A.1.125) family.</text>
</comment>